<sequence length="933" mass="100618">MWEPQGSLDPVLESIENELRDQVAEARSRWAGFDARLAIVQVGGREDSNVYIRMKLRAAENIGITAEHIQLPRDITETELLANITSLNESPYVHGIIVQMPLDSVHPIDSHAITDAVSPDKDVDGLNTINEGRVRVGDLSGFIPCTPAGCVELIKRTGVTIAGKNVVVLGRSRIVGTPVSELLKWEHATVTVCHSKTKNLSEITKTADILVVAIGRGEMVRGSWIKPGAVVIDCGINPISDPTKKSGQRLVGDVAYEEAVQVASHVTPVPGGVGPMTVAMLMRNTVQAARRQLDRLLAPTWPLRPLRITPLSPPPSDIVIARSQKPKDISELAHEIGLFSNEVSQYGRTKAKISLSVLDRMRNQQGAKYIVVAGITPTPLGEGKSTTLLGLVQALSAHRGRNSFAVMRQPSQGPTFGVKGGAAGGGYSQVIPMEEFNLHLTGDIHAGTAANNLLAAQMDARIFHELTQKDGPLFDRLVPKIKGVRKFSPIQLRRLKRLGITKTDPDTLTEGEKSKFARLNIDTSKIMWNRVVDLNDRYLRKITVGQSPTEKGFTRETAFDISVASEIMAILALGRDVEDIKERLANMVVALDKSGNPVTADDLGMTGALLVLLRDAFEPTLMQSLEGTPVLVHTGPFANIRHGCSSILADKIAMKLAGENGYVATEAGFGSDIGMEKFFDIKCRASGDTPHCAVIVSTVRALKMHGGGPPVSAGMPLNDVYVQENLELLSKGLCNLGKHISNGNKFGVPVVVAINKHGNDTPAELNLVKEFAVKNGAFRAVLCDHWAKGGLGALELADAVIEACDSKSKFDFLYPLQLSIQEKIQIIAKEMYGAGQVEYTDEVLEKIKTFTDMGYDKFPICMAKTSNSLTGDPAVKGAPTGFTLKINGIFASVGAGFVVPMVGEISKMPGLPTRPSIYDIDLNTKTGEIEGLF</sequence>
<organism>
    <name type="scientific">Spodoptera frugiperda</name>
    <name type="common">Fall armyworm</name>
    <dbReference type="NCBI Taxonomy" id="7108"/>
    <lineage>
        <taxon>Eukaryota</taxon>
        <taxon>Metazoa</taxon>
        <taxon>Ecdysozoa</taxon>
        <taxon>Arthropoda</taxon>
        <taxon>Hexapoda</taxon>
        <taxon>Insecta</taxon>
        <taxon>Pterygota</taxon>
        <taxon>Neoptera</taxon>
        <taxon>Endopterygota</taxon>
        <taxon>Lepidoptera</taxon>
        <taxon>Glossata</taxon>
        <taxon>Ditrysia</taxon>
        <taxon>Noctuoidea</taxon>
        <taxon>Noctuidae</taxon>
        <taxon>Amphipyrinae</taxon>
        <taxon>Spodoptera</taxon>
    </lineage>
</organism>
<feature type="chain" id="PRO_0000199325" description="C-1-tetrahydrofolate synthase, cytoplasmic">
    <location>
        <begin position="1"/>
        <end position="933"/>
    </location>
</feature>
<feature type="region of interest" description="Methylenetetrahydrofolate dehydrogenase and cyclohydrolase">
    <location>
        <begin position="1"/>
        <end position="303"/>
    </location>
</feature>
<feature type="region of interest" description="Formyltetrahydrofolate synthetase">
    <location>
        <begin position="304"/>
        <end position="933"/>
    </location>
</feature>
<feature type="binding site" evidence="1">
    <location>
        <begin position="51"/>
        <end position="55"/>
    </location>
    <ligand>
        <name>substrate</name>
    </ligand>
</feature>
<feature type="binding site" evidence="1">
    <location>
        <begin position="98"/>
        <end position="100"/>
    </location>
    <ligand>
        <name>substrate</name>
    </ligand>
</feature>
<feature type="binding site" evidence="1">
    <location>
        <begin position="170"/>
        <end position="172"/>
    </location>
    <ligand>
        <name>NADP(+)</name>
        <dbReference type="ChEBI" id="CHEBI:58349"/>
    </ligand>
</feature>
<feature type="binding site" evidence="1">
    <location>
        <position position="195"/>
    </location>
    <ligand>
        <name>NADP(+)</name>
        <dbReference type="ChEBI" id="CHEBI:58349"/>
    </ligand>
</feature>
<feature type="binding site" evidence="1">
    <location>
        <begin position="270"/>
        <end position="274"/>
    </location>
    <ligand>
        <name>substrate</name>
    </ligand>
</feature>
<feature type="binding site" evidence="1">
    <location>
        <begin position="378"/>
        <end position="385"/>
    </location>
    <ligand>
        <name>ATP</name>
        <dbReference type="ChEBI" id="CHEBI:30616"/>
    </ligand>
</feature>
<protein>
    <recommendedName>
        <fullName>C-1-tetrahydrofolate synthase, cytoplasmic</fullName>
        <shortName>C1-THF synthase</shortName>
    </recommendedName>
    <domain>
        <recommendedName>
            <fullName>Methylenetetrahydrofolate dehydrogenase</fullName>
            <ecNumber>1.5.1.5</ecNumber>
        </recommendedName>
    </domain>
    <domain>
        <recommendedName>
            <fullName>Methenyltetrahydrofolate cyclohydrolase</fullName>
            <ecNumber>3.5.4.9</ecNumber>
        </recommendedName>
    </domain>
    <domain>
        <recommendedName>
            <fullName>Formyltetrahydrofolate synthetase</fullName>
            <ecNumber>6.3.4.3</ecNumber>
        </recommendedName>
    </domain>
</protein>
<evidence type="ECO:0000250" key="1"/>
<evidence type="ECO:0000305" key="2"/>
<name>C1TC_SPOFR</name>
<keyword id="KW-0028">Amino-acid biosynthesis</keyword>
<keyword id="KW-0067">ATP-binding</keyword>
<keyword id="KW-0963">Cytoplasm</keyword>
<keyword id="KW-0368">Histidine biosynthesis</keyword>
<keyword id="KW-0378">Hydrolase</keyword>
<keyword id="KW-0436">Ligase</keyword>
<keyword id="KW-0486">Methionine biosynthesis</keyword>
<keyword id="KW-0511">Multifunctional enzyme</keyword>
<keyword id="KW-0521">NADP</keyword>
<keyword id="KW-0547">Nucleotide-binding</keyword>
<keyword id="KW-0554">One-carbon metabolism</keyword>
<keyword id="KW-0560">Oxidoreductase</keyword>
<keyword id="KW-0658">Purine biosynthesis</keyword>
<accession>Q27772</accession>
<reference key="1">
    <citation type="journal article" date="1995" name="Biochim. Biophys. Acta">
        <title>Primary structure of a folate-dependent trifunctional enzyme from Spodoptera frugiperda.</title>
        <authorList>
            <person name="Tremblay G.B."/>
            <person name="MacKenzie R.E."/>
        </authorList>
    </citation>
    <scope>NUCLEOTIDE SEQUENCE [MRNA]</scope>
    <source>
        <tissue>Ovary</tissue>
    </source>
</reference>
<dbReference type="EC" id="1.5.1.5"/>
<dbReference type="EC" id="3.5.4.9"/>
<dbReference type="EC" id="6.3.4.3"/>
<dbReference type="EMBL" id="L36189">
    <property type="protein sequence ID" value="AAA74302.1"/>
    <property type="molecule type" value="mRNA"/>
</dbReference>
<dbReference type="PIR" id="S53523">
    <property type="entry name" value="S53523"/>
</dbReference>
<dbReference type="SMR" id="Q27772"/>
<dbReference type="UniPathway" id="UPA00193"/>
<dbReference type="Proteomes" id="UP000829999">
    <property type="component" value="Unplaced"/>
</dbReference>
<dbReference type="GO" id="GO:0005829">
    <property type="term" value="C:cytosol"/>
    <property type="evidence" value="ECO:0007669"/>
    <property type="project" value="TreeGrafter"/>
</dbReference>
<dbReference type="GO" id="GO:0005524">
    <property type="term" value="F:ATP binding"/>
    <property type="evidence" value="ECO:0007669"/>
    <property type="project" value="UniProtKB-KW"/>
</dbReference>
<dbReference type="GO" id="GO:0004329">
    <property type="term" value="F:formate-tetrahydrofolate ligase activity"/>
    <property type="evidence" value="ECO:0007669"/>
    <property type="project" value="UniProtKB-EC"/>
</dbReference>
<dbReference type="GO" id="GO:0004477">
    <property type="term" value="F:methenyltetrahydrofolate cyclohydrolase activity"/>
    <property type="evidence" value="ECO:0007669"/>
    <property type="project" value="UniProtKB-EC"/>
</dbReference>
<dbReference type="GO" id="GO:0004488">
    <property type="term" value="F:methylenetetrahydrofolate dehydrogenase (NADP+) activity"/>
    <property type="evidence" value="ECO:0007669"/>
    <property type="project" value="UniProtKB-EC"/>
</dbReference>
<dbReference type="GO" id="GO:0000105">
    <property type="term" value="P:L-histidine biosynthetic process"/>
    <property type="evidence" value="ECO:0007669"/>
    <property type="project" value="UniProtKB-KW"/>
</dbReference>
<dbReference type="GO" id="GO:0009086">
    <property type="term" value="P:methionine biosynthetic process"/>
    <property type="evidence" value="ECO:0007669"/>
    <property type="project" value="UniProtKB-KW"/>
</dbReference>
<dbReference type="GO" id="GO:0006164">
    <property type="term" value="P:purine nucleotide biosynthetic process"/>
    <property type="evidence" value="ECO:0007669"/>
    <property type="project" value="UniProtKB-KW"/>
</dbReference>
<dbReference type="GO" id="GO:0035999">
    <property type="term" value="P:tetrahydrofolate interconversion"/>
    <property type="evidence" value="ECO:0007669"/>
    <property type="project" value="UniProtKB-UniPathway"/>
</dbReference>
<dbReference type="CDD" id="cd00477">
    <property type="entry name" value="FTHFS"/>
    <property type="match status" value="1"/>
</dbReference>
<dbReference type="CDD" id="cd01080">
    <property type="entry name" value="NAD_bind_m-THF_DH_Cyclohyd"/>
    <property type="match status" value="1"/>
</dbReference>
<dbReference type="FunFam" id="3.40.50.720:FF:000006">
    <property type="entry name" value="Bifunctional protein FolD"/>
    <property type="match status" value="1"/>
</dbReference>
<dbReference type="FunFam" id="3.40.50.300:FF:000245">
    <property type="entry name" value="C-1-tetrahydrofolate synthase, cytoplasmic"/>
    <property type="match status" value="1"/>
</dbReference>
<dbReference type="FunFam" id="3.40.50.10860:FF:000005">
    <property type="entry name" value="C-1-tetrahydrofolate synthase, cytoplasmic, putative"/>
    <property type="match status" value="1"/>
</dbReference>
<dbReference type="FunFam" id="1.10.8.770:FF:000001">
    <property type="entry name" value="Methylenetetrahydrofolate dehydrogenase (NADP+ dependent) 1 like"/>
    <property type="match status" value="1"/>
</dbReference>
<dbReference type="FunFam" id="3.40.50.300:FF:001522">
    <property type="entry name" value="Probable MIS1-C1-tetrahydrofolate synthase, mitochondrial"/>
    <property type="match status" value="1"/>
</dbReference>
<dbReference type="FunFam" id="3.10.410.10:FF:000001">
    <property type="entry name" value="Putative formate--tetrahydrofolate ligase"/>
    <property type="match status" value="1"/>
</dbReference>
<dbReference type="Gene3D" id="1.10.8.770">
    <property type="match status" value="1"/>
</dbReference>
<dbReference type="Gene3D" id="3.10.410.10">
    <property type="entry name" value="Formyltetrahydrofolate synthetase, domain 3"/>
    <property type="match status" value="1"/>
</dbReference>
<dbReference type="Gene3D" id="3.40.50.10860">
    <property type="entry name" value="Leucine Dehydrogenase, chain A, domain 1"/>
    <property type="match status" value="1"/>
</dbReference>
<dbReference type="Gene3D" id="3.40.50.720">
    <property type="entry name" value="NAD(P)-binding Rossmann-like Domain"/>
    <property type="match status" value="1"/>
</dbReference>
<dbReference type="Gene3D" id="3.40.50.300">
    <property type="entry name" value="P-loop containing nucleotide triphosphate hydrolases"/>
    <property type="match status" value="2"/>
</dbReference>
<dbReference type="HAMAP" id="MF_01543">
    <property type="entry name" value="FTHFS"/>
    <property type="match status" value="1"/>
</dbReference>
<dbReference type="HAMAP" id="MF_01576">
    <property type="entry name" value="THF_DHG_CYH"/>
    <property type="match status" value="1"/>
</dbReference>
<dbReference type="InterPro" id="IPR046346">
    <property type="entry name" value="Aminoacid_DH-like_N_sf"/>
</dbReference>
<dbReference type="InterPro" id="IPR000559">
    <property type="entry name" value="Formate_THF_ligase"/>
</dbReference>
<dbReference type="InterPro" id="IPR020628">
    <property type="entry name" value="Formate_THF_ligase_CS"/>
</dbReference>
<dbReference type="InterPro" id="IPR036291">
    <property type="entry name" value="NAD(P)-bd_dom_sf"/>
</dbReference>
<dbReference type="InterPro" id="IPR027417">
    <property type="entry name" value="P-loop_NTPase"/>
</dbReference>
<dbReference type="InterPro" id="IPR000672">
    <property type="entry name" value="THF_DH/CycHdrlase"/>
</dbReference>
<dbReference type="InterPro" id="IPR020630">
    <property type="entry name" value="THF_DH/CycHdrlase_cat_dom"/>
</dbReference>
<dbReference type="InterPro" id="IPR020867">
    <property type="entry name" value="THF_DH/CycHdrlase_CS"/>
</dbReference>
<dbReference type="InterPro" id="IPR020631">
    <property type="entry name" value="THF_DH/CycHdrlase_NAD-bd_dom"/>
</dbReference>
<dbReference type="PANTHER" id="PTHR48099:SF5">
    <property type="entry name" value="C-1-TETRAHYDROFOLATE SYNTHASE, CYTOPLASMIC"/>
    <property type="match status" value="1"/>
</dbReference>
<dbReference type="PANTHER" id="PTHR48099">
    <property type="entry name" value="C-1-TETRAHYDROFOLATE SYNTHASE, CYTOPLASMIC-RELATED"/>
    <property type="match status" value="1"/>
</dbReference>
<dbReference type="Pfam" id="PF01268">
    <property type="entry name" value="FTHFS"/>
    <property type="match status" value="1"/>
</dbReference>
<dbReference type="Pfam" id="PF00763">
    <property type="entry name" value="THF_DHG_CYH"/>
    <property type="match status" value="1"/>
</dbReference>
<dbReference type="Pfam" id="PF02882">
    <property type="entry name" value="THF_DHG_CYH_C"/>
    <property type="match status" value="1"/>
</dbReference>
<dbReference type="PRINTS" id="PR00085">
    <property type="entry name" value="THFDHDRGNASE"/>
</dbReference>
<dbReference type="SUPFAM" id="SSF53223">
    <property type="entry name" value="Aminoacid dehydrogenase-like, N-terminal domain"/>
    <property type="match status" value="1"/>
</dbReference>
<dbReference type="SUPFAM" id="SSF51735">
    <property type="entry name" value="NAD(P)-binding Rossmann-fold domains"/>
    <property type="match status" value="1"/>
</dbReference>
<dbReference type="SUPFAM" id="SSF52540">
    <property type="entry name" value="P-loop containing nucleoside triphosphate hydrolases"/>
    <property type="match status" value="1"/>
</dbReference>
<dbReference type="PROSITE" id="PS00721">
    <property type="entry name" value="FTHFS_1"/>
    <property type="match status" value="1"/>
</dbReference>
<dbReference type="PROSITE" id="PS00722">
    <property type="entry name" value="FTHFS_2"/>
    <property type="match status" value="1"/>
</dbReference>
<dbReference type="PROSITE" id="PS00766">
    <property type="entry name" value="THF_DHG_CYH_1"/>
    <property type="match status" value="1"/>
</dbReference>
<dbReference type="PROSITE" id="PS00767">
    <property type="entry name" value="THF_DHG_CYH_2"/>
    <property type="match status" value="1"/>
</dbReference>
<comment type="catalytic activity">
    <reaction>
        <text>(6R)-5,10-methylene-5,6,7,8-tetrahydrofolate + NADP(+) = (6R)-5,10-methenyltetrahydrofolate + NADPH</text>
        <dbReference type="Rhea" id="RHEA:22812"/>
        <dbReference type="ChEBI" id="CHEBI:15636"/>
        <dbReference type="ChEBI" id="CHEBI:57455"/>
        <dbReference type="ChEBI" id="CHEBI:57783"/>
        <dbReference type="ChEBI" id="CHEBI:58349"/>
        <dbReference type="EC" id="1.5.1.5"/>
    </reaction>
</comment>
<comment type="catalytic activity">
    <reaction>
        <text>(6R)-5,10-methenyltetrahydrofolate + H2O = (6R)-10-formyltetrahydrofolate + H(+)</text>
        <dbReference type="Rhea" id="RHEA:23700"/>
        <dbReference type="ChEBI" id="CHEBI:15377"/>
        <dbReference type="ChEBI" id="CHEBI:15378"/>
        <dbReference type="ChEBI" id="CHEBI:57455"/>
        <dbReference type="ChEBI" id="CHEBI:195366"/>
        <dbReference type="EC" id="3.5.4.9"/>
    </reaction>
</comment>
<comment type="catalytic activity">
    <reaction>
        <text>(6S)-5,6,7,8-tetrahydrofolate + formate + ATP = (6R)-10-formyltetrahydrofolate + ADP + phosphate</text>
        <dbReference type="Rhea" id="RHEA:20221"/>
        <dbReference type="ChEBI" id="CHEBI:15740"/>
        <dbReference type="ChEBI" id="CHEBI:30616"/>
        <dbReference type="ChEBI" id="CHEBI:43474"/>
        <dbReference type="ChEBI" id="CHEBI:57453"/>
        <dbReference type="ChEBI" id="CHEBI:195366"/>
        <dbReference type="ChEBI" id="CHEBI:456216"/>
        <dbReference type="EC" id="6.3.4.3"/>
    </reaction>
</comment>
<comment type="pathway">
    <text>One-carbon metabolism; tetrahydrofolate interconversion.</text>
</comment>
<comment type="subunit">
    <text evidence="1">Homodimer.</text>
</comment>
<comment type="subcellular location">
    <subcellularLocation>
        <location evidence="1">Cytoplasm</location>
    </subcellularLocation>
</comment>
<comment type="domain">
    <text>This trifunctional enzyme consists of two major domains: an N-terminal part containing the methylene-THF dehydrogenase and cyclohydrolase activities and a larger C-terminal part containing formyl-THF synthetase activity.</text>
</comment>
<comment type="similarity">
    <text evidence="2">In the N-terminal section; belongs to the tetrahydrofolate dehydrogenase/cyclohydrolase family.</text>
</comment>
<comment type="similarity">
    <text evidence="2">In the C-terminal section; belongs to the formate--tetrahydrofolate ligase family.</text>
</comment>
<proteinExistence type="evidence at transcript level"/>